<sequence length="804" mass="89541">MAMKKLLIASLLFSSATVYGAEGFVVKDIHFEGLQRVAVGAALLSMPVRTGDTVNDEDISNTIRALFATGNFEDVRVLRDGNTLLVQVKERPTIASITFSGNKSVKDDMLKQNLEASGVRVGESLDRTTLSDIEKGLEDFYYSVGKYSASVKAVVTPLPRNRVDLKLVFQEGVSAKIQQINIVGNHAFSTEELISHFQLRDEVPWWNVVGDRKYQKQKLAGDLETLRSYYLDRGYARFNIDSTQVSLTPDKKGIYITVNITEGDQYKLSGVQVSGNLAGHSAEIEKLTKIEPGELYNGTKVTKMEDDIKKLLGRYGYAYPRVQSQPEINDADKTVKLRVNVDAGNRFYVRKIRFEGNDTSKDSVLRREMRQMEGAWLGSDLVDQGKERLNRLGFFETVDTDTQRVPGSPDQVDVVYKVKERNTGSFNFGIGYGTESGVSFQAGVQQDNWLGTGYSVGINGTKNDYQTYSELSVTNPYFTVDGVSLGGRIFYNDFQADDADLSDYTNKSYGTDVTLGFPINEYNTLRAGLGYVHNKLSNMQPQIAMDRYLESMGQSADTSSFAADDFTFNYGWTYNKLDRGYFPTDGSRVNLTGKVTIPGSDNEYYKVSLDTATYVPIDNDHKWVVLGRTRWGYGDGLGGKEMPFYENFYAGGSSTVRGFQSNTIGPKAVYKNGAHTSWDDNDDYEDCTQESGCKSDDAVGGNAMAVASLEFITPTPFISEKYANSVRTSFFWDMGTVWDTNWDPSSAPSDVPDYSDPGNIRMSAGIALQWMSPLGPLVFSYAQPFKKYDGDKAEQFQFNIGKTW</sequence>
<feature type="signal peptide" evidence="1">
    <location>
        <begin position="1"/>
        <end position="20"/>
    </location>
</feature>
<feature type="chain" id="PRO_1000145782" description="Outer membrane protein assembly factor BamA">
    <location>
        <begin position="21"/>
        <end position="804"/>
    </location>
</feature>
<feature type="domain" description="POTRA 1" evidence="2">
    <location>
        <begin position="24"/>
        <end position="91"/>
    </location>
</feature>
<feature type="domain" description="POTRA 2" evidence="2">
    <location>
        <begin position="92"/>
        <end position="172"/>
    </location>
</feature>
<feature type="domain" description="POTRA 3" evidence="2">
    <location>
        <begin position="175"/>
        <end position="263"/>
    </location>
</feature>
<feature type="domain" description="POTRA 4" evidence="2">
    <location>
        <begin position="266"/>
        <end position="344"/>
    </location>
</feature>
<feature type="domain" description="POTRA 5" evidence="2">
    <location>
        <begin position="347"/>
        <end position="421"/>
    </location>
</feature>
<accession>B5FJ24</accession>
<evidence type="ECO:0000255" key="1">
    <source>
        <dbReference type="HAMAP-Rule" id="MF_01430"/>
    </source>
</evidence>
<evidence type="ECO:0000255" key="2">
    <source>
        <dbReference type="PROSITE-ProRule" id="PRU01115"/>
    </source>
</evidence>
<reference key="1">
    <citation type="journal article" date="2011" name="J. Bacteriol.">
        <title>Comparative genomics of 28 Salmonella enterica isolates: evidence for CRISPR-mediated adaptive sublineage evolution.</title>
        <authorList>
            <person name="Fricke W.F."/>
            <person name="Mammel M.K."/>
            <person name="McDermott P.F."/>
            <person name="Tartera C."/>
            <person name="White D.G."/>
            <person name="Leclerc J.E."/>
            <person name="Ravel J."/>
            <person name="Cebula T.A."/>
        </authorList>
    </citation>
    <scope>NUCLEOTIDE SEQUENCE [LARGE SCALE GENOMIC DNA]</scope>
    <source>
        <strain>CT_02021853</strain>
    </source>
</reference>
<gene>
    <name evidence="1" type="primary">bamA</name>
    <name type="synonym">yaeT</name>
    <name type="ordered locus">SeD_A0246</name>
</gene>
<comment type="function">
    <text evidence="1">Part of the outer membrane protein assembly complex, which is involved in assembly and insertion of beta-barrel proteins into the outer membrane. Constitutes, with BamD, the core component of the assembly machinery.</text>
</comment>
<comment type="subunit">
    <text evidence="1">Part of the Bam complex, which is composed of the outer membrane protein BamA, and four lipoproteins BamB, BamC, BamD and BamE.</text>
</comment>
<comment type="subcellular location">
    <subcellularLocation>
        <location evidence="1">Cell outer membrane</location>
    </subcellularLocation>
</comment>
<comment type="similarity">
    <text evidence="1">Belongs to the BamA family.</text>
</comment>
<proteinExistence type="inferred from homology"/>
<keyword id="KW-0998">Cell outer membrane</keyword>
<keyword id="KW-0472">Membrane</keyword>
<keyword id="KW-0677">Repeat</keyword>
<keyword id="KW-0732">Signal</keyword>
<keyword id="KW-0812">Transmembrane</keyword>
<keyword id="KW-1134">Transmembrane beta strand</keyword>
<protein>
    <recommendedName>
        <fullName evidence="1">Outer membrane protein assembly factor BamA</fullName>
    </recommendedName>
</protein>
<organism>
    <name type="scientific">Salmonella dublin (strain CT_02021853)</name>
    <dbReference type="NCBI Taxonomy" id="439851"/>
    <lineage>
        <taxon>Bacteria</taxon>
        <taxon>Pseudomonadati</taxon>
        <taxon>Pseudomonadota</taxon>
        <taxon>Gammaproteobacteria</taxon>
        <taxon>Enterobacterales</taxon>
        <taxon>Enterobacteriaceae</taxon>
        <taxon>Salmonella</taxon>
    </lineage>
</organism>
<name>BAMA_SALDC</name>
<dbReference type="EMBL" id="CP001144">
    <property type="protein sequence ID" value="ACH73844.1"/>
    <property type="molecule type" value="Genomic_DNA"/>
</dbReference>
<dbReference type="RefSeq" id="WP_001240929.1">
    <property type="nucleotide sequence ID" value="NC_011205.1"/>
</dbReference>
<dbReference type="SMR" id="B5FJ24"/>
<dbReference type="KEGG" id="sed:SeD_A0246"/>
<dbReference type="HOGENOM" id="CLU_007664_1_0_6"/>
<dbReference type="Proteomes" id="UP000008322">
    <property type="component" value="Chromosome"/>
</dbReference>
<dbReference type="GO" id="GO:1990063">
    <property type="term" value="C:Bam protein complex"/>
    <property type="evidence" value="ECO:0007669"/>
    <property type="project" value="TreeGrafter"/>
</dbReference>
<dbReference type="GO" id="GO:0043165">
    <property type="term" value="P:Gram-negative-bacterium-type cell outer membrane assembly"/>
    <property type="evidence" value="ECO:0007669"/>
    <property type="project" value="UniProtKB-UniRule"/>
</dbReference>
<dbReference type="GO" id="GO:0051205">
    <property type="term" value="P:protein insertion into membrane"/>
    <property type="evidence" value="ECO:0007669"/>
    <property type="project" value="UniProtKB-UniRule"/>
</dbReference>
<dbReference type="FunFam" id="2.40.160.50:FF:000001">
    <property type="entry name" value="Outer membrane protein assembly factor BamA"/>
    <property type="match status" value="1"/>
</dbReference>
<dbReference type="FunFam" id="3.10.20.310:FF:000001">
    <property type="entry name" value="Outer membrane protein assembly factor BamA"/>
    <property type="match status" value="1"/>
</dbReference>
<dbReference type="FunFam" id="3.10.20.310:FF:000002">
    <property type="entry name" value="Outer membrane protein assembly factor BamA"/>
    <property type="match status" value="1"/>
</dbReference>
<dbReference type="FunFam" id="3.10.20.310:FF:000003">
    <property type="entry name" value="Outer membrane protein assembly factor BamA"/>
    <property type="match status" value="1"/>
</dbReference>
<dbReference type="FunFam" id="3.10.20.310:FF:000004">
    <property type="entry name" value="Outer membrane protein assembly factor BamA"/>
    <property type="match status" value="1"/>
</dbReference>
<dbReference type="FunFam" id="3.10.20.310:FF:000005">
    <property type="entry name" value="Outer membrane protein assembly factor BamA"/>
    <property type="match status" value="1"/>
</dbReference>
<dbReference type="Gene3D" id="3.10.20.310">
    <property type="entry name" value="membrane protein fhac"/>
    <property type="match status" value="5"/>
</dbReference>
<dbReference type="Gene3D" id="2.40.160.50">
    <property type="entry name" value="membrane protein fhac: a member of the omp85/tpsb transporter family"/>
    <property type="match status" value="1"/>
</dbReference>
<dbReference type="HAMAP" id="MF_01430">
    <property type="entry name" value="OM_assembly_BamA"/>
    <property type="match status" value="1"/>
</dbReference>
<dbReference type="InterPro" id="IPR000184">
    <property type="entry name" value="Bac_surfAg_D15"/>
</dbReference>
<dbReference type="InterPro" id="IPR010827">
    <property type="entry name" value="BamA/TamA_POTRA"/>
</dbReference>
<dbReference type="InterPro" id="IPR039910">
    <property type="entry name" value="D15-like"/>
</dbReference>
<dbReference type="InterPro" id="IPR023707">
    <property type="entry name" value="OM_assembly_BamA"/>
</dbReference>
<dbReference type="InterPro" id="IPR034746">
    <property type="entry name" value="POTRA"/>
</dbReference>
<dbReference type="NCBIfam" id="TIGR03303">
    <property type="entry name" value="OM_YaeT"/>
    <property type="match status" value="1"/>
</dbReference>
<dbReference type="NCBIfam" id="NF008287">
    <property type="entry name" value="PRK11067.1"/>
    <property type="match status" value="1"/>
</dbReference>
<dbReference type="PANTHER" id="PTHR12815:SF23">
    <property type="entry name" value="OUTER MEMBRANE PROTEIN ASSEMBLY FACTOR BAMA"/>
    <property type="match status" value="1"/>
</dbReference>
<dbReference type="PANTHER" id="PTHR12815">
    <property type="entry name" value="SORTING AND ASSEMBLY MACHINERY SAMM50 PROTEIN FAMILY MEMBER"/>
    <property type="match status" value="1"/>
</dbReference>
<dbReference type="Pfam" id="PF01103">
    <property type="entry name" value="Omp85"/>
    <property type="match status" value="1"/>
</dbReference>
<dbReference type="Pfam" id="PF07244">
    <property type="entry name" value="POTRA"/>
    <property type="match status" value="4"/>
</dbReference>
<dbReference type="PIRSF" id="PIRSF006076">
    <property type="entry name" value="OM_assembly_OMP85"/>
    <property type="match status" value="1"/>
</dbReference>
<dbReference type="PROSITE" id="PS51779">
    <property type="entry name" value="POTRA"/>
    <property type="match status" value="5"/>
</dbReference>